<comment type="function">
    <text>May be involved in transcriptional regulation.</text>
</comment>
<comment type="subcellular location">
    <subcellularLocation>
        <location evidence="3">Nucleus</location>
    </subcellularLocation>
</comment>
<comment type="developmental stage">
    <text>Expressed early during embryonic development.</text>
</comment>
<comment type="similarity">
    <text evidence="3">Belongs to the krueppel C2H2-type zinc-finger protein family.</text>
</comment>
<organism>
    <name type="scientific">Homo sapiens</name>
    <name type="common">Human</name>
    <dbReference type="NCBI Taxonomy" id="9606"/>
    <lineage>
        <taxon>Eukaryota</taxon>
        <taxon>Metazoa</taxon>
        <taxon>Chordata</taxon>
        <taxon>Craniata</taxon>
        <taxon>Vertebrata</taxon>
        <taxon>Euteleostomi</taxon>
        <taxon>Mammalia</taxon>
        <taxon>Eutheria</taxon>
        <taxon>Euarchontoglires</taxon>
        <taxon>Primates</taxon>
        <taxon>Haplorrhini</taxon>
        <taxon>Catarrhini</taxon>
        <taxon>Hominidae</taxon>
        <taxon>Homo</taxon>
    </lineage>
</organism>
<feature type="chain" id="PRO_0000047399" description="Zinc finger protein 90">
    <location>
        <begin position="1"/>
        <end position="601"/>
    </location>
</feature>
<feature type="domain" description="KRAB" evidence="2">
    <location>
        <begin position="4"/>
        <end position="75"/>
    </location>
</feature>
<feature type="zinc finger region" description="C2H2-type 1" evidence="1">
    <location>
        <begin position="173"/>
        <end position="195"/>
    </location>
</feature>
<feature type="zinc finger region" description="C2H2-type 2" evidence="1">
    <location>
        <begin position="201"/>
        <end position="223"/>
    </location>
</feature>
<feature type="zinc finger region" description="C2H2-type 3" evidence="1">
    <location>
        <begin position="229"/>
        <end position="251"/>
    </location>
</feature>
<feature type="zinc finger region" description="C2H2-type 4" evidence="1">
    <location>
        <begin position="257"/>
        <end position="279"/>
    </location>
</feature>
<feature type="zinc finger region" description="C2H2-type 5" evidence="1">
    <location>
        <begin position="285"/>
        <end position="307"/>
    </location>
</feature>
<feature type="zinc finger region" description="C2H2-type 6" evidence="1">
    <location>
        <begin position="313"/>
        <end position="335"/>
    </location>
</feature>
<feature type="zinc finger region" description="C2H2-type 7" evidence="1">
    <location>
        <begin position="341"/>
        <end position="363"/>
    </location>
</feature>
<feature type="zinc finger region" description="C2H2-type 8" evidence="1">
    <location>
        <begin position="369"/>
        <end position="391"/>
    </location>
</feature>
<feature type="zinc finger region" description="C2H2-type 9" evidence="1">
    <location>
        <begin position="397"/>
        <end position="419"/>
    </location>
</feature>
<feature type="zinc finger region" description="C2H2-type 10" evidence="1">
    <location>
        <begin position="425"/>
        <end position="447"/>
    </location>
</feature>
<feature type="zinc finger region" description="C2H2-type 11" evidence="1">
    <location>
        <begin position="453"/>
        <end position="475"/>
    </location>
</feature>
<feature type="zinc finger region" description="C2H2-type 12" evidence="1">
    <location>
        <begin position="481"/>
        <end position="503"/>
    </location>
</feature>
<feature type="zinc finger region" description="C2H2-type 13" evidence="1">
    <location>
        <begin position="509"/>
        <end position="531"/>
    </location>
</feature>
<feature type="zinc finger region" description="C2H2-type 14" evidence="1">
    <location>
        <begin position="537"/>
        <end position="559"/>
    </location>
</feature>
<feature type="zinc finger region" description="C2H2-type 15" evidence="1">
    <location>
        <begin position="565"/>
        <end position="587"/>
    </location>
</feature>
<evidence type="ECO:0000255" key="1">
    <source>
        <dbReference type="PROSITE-ProRule" id="PRU00042"/>
    </source>
</evidence>
<evidence type="ECO:0000255" key="2">
    <source>
        <dbReference type="PROSITE-ProRule" id="PRU00119"/>
    </source>
</evidence>
<evidence type="ECO:0000305" key="3"/>
<protein>
    <recommendedName>
        <fullName>Zinc finger protein 90</fullName>
    </recommendedName>
    <alternativeName>
        <fullName>Zinc finger protein HTF9</fullName>
    </alternativeName>
</protein>
<proteinExistence type="evidence at protein level"/>
<dbReference type="EMBL" id="AC011447">
    <property type="status" value="NOT_ANNOTATED_CDS"/>
    <property type="molecule type" value="Genomic_DNA"/>
</dbReference>
<dbReference type="EMBL" id="BC137211">
    <property type="protein sequence ID" value="AAI37212.1"/>
    <property type="molecule type" value="mRNA"/>
</dbReference>
<dbReference type="EMBL" id="CN386341">
    <property type="status" value="NOT_ANNOTATED_CDS"/>
    <property type="molecule type" value="mRNA"/>
</dbReference>
<dbReference type="EMBL" id="M61870">
    <property type="protein sequence ID" value="AAA36028.1"/>
    <property type="molecule type" value="mRNA"/>
</dbReference>
<dbReference type="CCDS" id="CCDS46028.1"/>
<dbReference type="PIR" id="E39384">
    <property type="entry name" value="E39384"/>
</dbReference>
<dbReference type="RefSeq" id="NP_009069.1">
    <property type="nucleotide sequence ID" value="NM_007138.2"/>
</dbReference>
<dbReference type="SMR" id="Q03938"/>
<dbReference type="BioGRID" id="113459">
    <property type="interactions" value="3"/>
</dbReference>
<dbReference type="IntAct" id="Q03938">
    <property type="interactions" value="4"/>
</dbReference>
<dbReference type="STRING" id="9606.ENSP00000410466"/>
<dbReference type="iPTMnet" id="Q03938"/>
<dbReference type="PhosphoSitePlus" id="Q03938"/>
<dbReference type="BioMuta" id="ZNF90"/>
<dbReference type="DMDM" id="300669708"/>
<dbReference type="jPOST" id="Q03938"/>
<dbReference type="MassIVE" id="Q03938"/>
<dbReference type="PaxDb" id="9606-ENSP00000410466"/>
<dbReference type="PeptideAtlas" id="Q03938"/>
<dbReference type="ProteomicsDB" id="58233"/>
<dbReference type="Antibodypedia" id="28581">
    <property type="antibodies" value="94 antibodies from 16 providers"/>
</dbReference>
<dbReference type="DNASU" id="7643"/>
<dbReference type="Ensembl" id="ENST00000418063.3">
    <property type="protein sequence ID" value="ENSP00000410466.2"/>
    <property type="gene ID" value="ENSG00000213988.11"/>
</dbReference>
<dbReference type="GeneID" id="7643"/>
<dbReference type="KEGG" id="hsa:7643"/>
<dbReference type="MANE-Select" id="ENST00000418063.3">
    <property type="protein sequence ID" value="ENSP00000410466.2"/>
    <property type="RefSeq nucleotide sequence ID" value="NM_007138.2"/>
    <property type="RefSeq protein sequence ID" value="NP_009069.1"/>
</dbReference>
<dbReference type="UCSC" id="uc002nor.3">
    <property type="organism name" value="human"/>
</dbReference>
<dbReference type="AGR" id="HGNC:13165"/>
<dbReference type="CTD" id="7643"/>
<dbReference type="DisGeNET" id="7643"/>
<dbReference type="GeneCards" id="ZNF90"/>
<dbReference type="HGNC" id="HGNC:13165">
    <property type="gene designation" value="ZNF90"/>
</dbReference>
<dbReference type="HPA" id="ENSG00000213988">
    <property type="expression patterns" value="Low tissue specificity"/>
</dbReference>
<dbReference type="MIM" id="603973">
    <property type="type" value="gene"/>
</dbReference>
<dbReference type="neXtProt" id="NX_Q03938"/>
<dbReference type="OpenTargets" id="ENSG00000213988"/>
<dbReference type="PharmGKB" id="PA37738"/>
<dbReference type="VEuPathDB" id="HostDB:ENSG00000213988"/>
<dbReference type="eggNOG" id="KOG1721">
    <property type="taxonomic scope" value="Eukaryota"/>
</dbReference>
<dbReference type="GeneTree" id="ENSGT00940000153236"/>
<dbReference type="HOGENOM" id="CLU_002678_44_0_1"/>
<dbReference type="InParanoid" id="Q03938"/>
<dbReference type="OMA" id="HIGQKAY"/>
<dbReference type="OrthoDB" id="6077919at2759"/>
<dbReference type="PAN-GO" id="Q03938">
    <property type="GO annotations" value="3 GO annotations based on evolutionary models"/>
</dbReference>
<dbReference type="PhylomeDB" id="Q03938"/>
<dbReference type="TreeFam" id="TF342117"/>
<dbReference type="PathwayCommons" id="Q03938"/>
<dbReference type="BioGRID-ORCS" id="7643">
    <property type="hits" value="11 hits in 1090 CRISPR screens"/>
</dbReference>
<dbReference type="ChiTaRS" id="ZNF90">
    <property type="organism name" value="human"/>
</dbReference>
<dbReference type="GenomeRNAi" id="7643"/>
<dbReference type="Pharos" id="Q03938">
    <property type="development level" value="Tbio"/>
</dbReference>
<dbReference type="PRO" id="PR:Q03938"/>
<dbReference type="Proteomes" id="UP000005640">
    <property type="component" value="Chromosome 19"/>
</dbReference>
<dbReference type="RNAct" id="Q03938">
    <property type="molecule type" value="protein"/>
</dbReference>
<dbReference type="Bgee" id="ENSG00000213988">
    <property type="expression patterns" value="Expressed in primordial germ cell in gonad and 96 other cell types or tissues"/>
</dbReference>
<dbReference type="ExpressionAtlas" id="Q03938">
    <property type="expression patterns" value="baseline and differential"/>
</dbReference>
<dbReference type="GO" id="GO:0005634">
    <property type="term" value="C:nucleus"/>
    <property type="evidence" value="ECO:0007669"/>
    <property type="project" value="UniProtKB-SubCell"/>
</dbReference>
<dbReference type="GO" id="GO:0003700">
    <property type="term" value="F:DNA-binding transcription factor activity"/>
    <property type="evidence" value="ECO:0000303"/>
    <property type="project" value="UniProtKB"/>
</dbReference>
<dbReference type="GO" id="GO:0000981">
    <property type="term" value="F:DNA-binding transcription factor activity, RNA polymerase II-specific"/>
    <property type="evidence" value="ECO:0000318"/>
    <property type="project" value="GO_Central"/>
</dbReference>
<dbReference type="GO" id="GO:0000978">
    <property type="term" value="F:RNA polymerase II cis-regulatory region sequence-specific DNA binding"/>
    <property type="evidence" value="ECO:0000318"/>
    <property type="project" value="GO_Central"/>
</dbReference>
<dbReference type="GO" id="GO:0008270">
    <property type="term" value="F:zinc ion binding"/>
    <property type="evidence" value="ECO:0000303"/>
    <property type="project" value="UniProtKB"/>
</dbReference>
<dbReference type="GO" id="GO:0006355">
    <property type="term" value="P:regulation of DNA-templated transcription"/>
    <property type="evidence" value="ECO:0000318"/>
    <property type="project" value="GO_Central"/>
</dbReference>
<dbReference type="CDD" id="cd07765">
    <property type="entry name" value="KRAB_A-box"/>
    <property type="match status" value="1"/>
</dbReference>
<dbReference type="FunFam" id="3.30.160.60:FF:000034">
    <property type="entry name" value="zinc finger protein 25"/>
    <property type="match status" value="3"/>
</dbReference>
<dbReference type="FunFam" id="3.30.160.60:FF:001868">
    <property type="entry name" value="Zinc finger protein 264"/>
    <property type="match status" value="1"/>
</dbReference>
<dbReference type="FunFam" id="3.30.160.60:FF:000690">
    <property type="entry name" value="Zinc finger protein 354C"/>
    <property type="match status" value="2"/>
</dbReference>
<dbReference type="FunFam" id="3.30.160.60:FF:000120">
    <property type="entry name" value="Zinc finger protein 430"/>
    <property type="match status" value="2"/>
</dbReference>
<dbReference type="FunFam" id="3.30.160.60:FF:000362">
    <property type="entry name" value="Zinc finger protein 606"/>
    <property type="match status" value="6"/>
</dbReference>
<dbReference type="FunFam" id="3.30.160.60:FF:002483">
    <property type="entry name" value="Zinc finger protein 90"/>
    <property type="match status" value="1"/>
</dbReference>
<dbReference type="Gene3D" id="6.10.140.140">
    <property type="match status" value="1"/>
</dbReference>
<dbReference type="Gene3D" id="3.30.160.60">
    <property type="entry name" value="Classic Zinc Finger"/>
    <property type="match status" value="15"/>
</dbReference>
<dbReference type="InterPro" id="IPR001909">
    <property type="entry name" value="KRAB"/>
</dbReference>
<dbReference type="InterPro" id="IPR036051">
    <property type="entry name" value="KRAB_dom_sf"/>
</dbReference>
<dbReference type="InterPro" id="IPR036236">
    <property type="entry name" value="Znf_C2H2_sf"/>
</dbReference>
<dbReference type="InterPro" id="IPR013087">
    <property type="entry name" value="Znf_C2H2_type"/>
</dbReference>
<dbReference type="PANTHER" id="PTHR14003">
    <property type="entry name" value="TRANSCRIPTIONAL REPRESSOR PROTEIN YY"/>
    <property type="match status" value="1"/>
</dbReference>
<dbReference type="PANTHER" id="PTHR14003:SF23">
    <property type="entry name" value="ZINC FINGER PROTEIN 143"/>
    <property type="match status" value="1"/>
</dbReference>
<dbReference type="Pfam" id="PF01352">
    <property type="entry name" value="KRAB"/>
    <property type="match status" value="1"/>
</dbReference>
<dbReference type="Pfam" id="PF00096">
    <property type="entry name" value="zf-C2H2"/>
    <property type="match status" value="14"/>
</dbReference>
<dbReference type="SMART" id="SM00349">
    <property type="entry name" value="KRAB"/>
    <property type="match status" value="1"/>
</dbReference>
<dbReference type="SMART" id="SM00355">
    <property type="entry name" value="ZnF_C2H2"/>
    <property type="match status" value="15"/>
</dbReference>
<dbReference type="SUPFAM" id="SSF57667">
    <property type="entry name" value="beta-beta-alpha zinc fingers"/>
    <property type="match status" value="8"/>
</dbReference>
<dbReference type="SUPFAM" id="SSF109640">
    <property type="entry name" value="KRAB domain (Kruppel-associated box)"/>
    <property type="match status" value="1"/>
</dbReference>
<dbReference type="PROSITE" id="PS50805">
    <property type="entry name" value="KRAB"/>
    <property type="match status" value="1"/>
</dbReference>
<dbReference type="PROSITE" id="PS00028">
    <property type="entry name" value="ZINC_FINGER_C2H2_1"/>
    <property type="match status" value="15"/>
</dbReference>
<dbReference type="PROSITE" id="PS50157">
    <property type="entry name" value="ZINC_FINGER_C2H2_2"/>
    <property type="match status" value="15"/>
</dbReference>
<reference key="1">
    <citation type="journal article" date="2004" name="Nature">
        <title>The DNA sequence and biology of human chromosome 19.</title>
        <authorList>
            <person name="Grimwood J."/>
            <person name="Gordon L.A."/>
            <person name="Olsen A.S."/>
            <person name="Terry A."/>
            <person name="Schmutz J."/>
            <person name="Lamerdin J.E."/>
            <person name="Hellsten U."/>
            <person name="Goodstein D."/>
            <person name="Couronne O."/>
            <person name="Tran-Gyamfi M."/>
            <person name="Aerts A."/>
            <person name="Altherr M."/>
            <person name="Ashworth L."/>
            <person name="Bajorek E."/>
            <person name="Black S."/>
            <person name="Branscomb E."/>
            <person name="Caenepeel S."/>
            <person name="Carrano A.V."/>
            <person name="Caoile C."/>
            <person name="Chan Y.M."/>
            <person name="Christensen M."/>
            <person name="Cleland C.A."/>
            <person name="Copeland A."/>
            <person name="Dalin E."/>
            <person name="Dehal P."/>
            <person name="Denys M."/>
            <person name="Detter J.C."/>
            <person name="Escobar J."/>
            <person name="Flowers D."/>
            <person name="Fotopulos D."/>
            <person name="Garcia C."/>
            <person name="Georgescu A.M."/>
            <person name="Glavina T."/>
            <person name="Gomez M."/>
            <person name="Gonzales E."/>
            <person name="Groza M."/>
            <person name="Hammon N."/>
            <person name="Hawkins T."/>
            <person name="Haydu L."/>
            <person name="Ho I."/>
            <person name="Huang W."/>
            <person name="Israni S."/>
            <person name="Jett J."/>
            <person name="Kadner K."/>
            <person name="Kimball H."/>
            <person name="Kobayashi A."/>
            <person name="Larionov V."/>
            <person name="Leem S.-H."/>
            <person name="Lopez F."/>
            <person name="Lou Y."/>
            <person name="Lowry S."/>
            <person name="Malfatti S."/>
            <person name="Martinez D."/>
            <person name="McCready P.M."/>
            <person name="Medina C."/>
            <person name="Morgan J."/>
            <person name="Nelson K."/>
            <person name="Nolan M."/>
            <person name="Ovcharenko I."/>
            <person name="Pitluck S."/>
            <person name="Pollard M."/>
            <person name="Popkie A.P."/>
            <person name="Predki P."/>
            <person name="Quan G."/>
            <person name="Ramirez L."/>
            <person name="Rash S."/>
            <person name="Retterer J."/>
            <person name="Rodriguez A."/>
            <person name="Rogers S."/>
            <person name="Salamov A."/>
            <person name="Salazar A."/>
            <person name="She X."/>
            <person name="Smith D."/>
            <person name="Slezak T."/>
            <person name="Solovyev V."/>
            <person name="Thayer N."/>
            <person name="Tice H."/>
            <person name="Tsai M."/>
            <person name="Ustaszewska A."/>
            <person name="Vo N."/>
            <person name="Wagner M."/>
            <person name="Wheeler J."/>
            <person name="Wu K."/>
            <person name="Xie G."/>
            <person name="Yang J."/>
            <person name="Dubchak I."/>
            <person name="Furey T.S."/>
            <person name="DeJong P."/>
            <person name="Dickson M."/>
            <person name="Gordon D."/>
            <person name="Eichler E.E."/>
            <person name="Pennacchio L.A."/>
            <person name="Richardson P."/>
            <person name="Stubbs L."/>
            <person name="Rokhsar D.S."/>
            <person name="Myers R.M."/>
            <person name="Rubin E.M."/>
            <person name="Lucas S.M."/>
        </authorList>
    </citation>
    <scope>NUCLEOTIDE SEQUENCE [LARGE SCALE GENOMIC DNA]</scope>
</reference>
<reference key="2">
    <citation type="journal article" date="2004" name="Genome Res.">
        <title>The status, quality, and expansion of the NIH full-length cDNA project: the Mammalian Gene Collection (MGC).</title>
        <authorList>
            <consortium name="The MGC Project Team"/>
        </authorList>
    </citation>
    <scope>NUCLEOTIDE SEQUENCE [LARGE SCALE MRNA]</scope>
</reference>
<reference key="3">
    <citation type="journal article" date="2004" name="Nat. Biotechnol.">
        <title>Transcriptome characterization elucidates signaling networks that control human ES cell growth and differentiation.</title>
        <authorList>
            <person name="Brandenberger R."/>
            <person name="Wei H."/>
            <person name="Zhang S."/>
            <person name="Lei S."/>
            <person name="Murage J."/>
            <person name="Fisk G.J."/>
            <person name="Li Y."/>
            <person name="Xu C."/>
            <person name="Fang R."/>
            <person name="Guegler K."/>
            <person name="Rao M.S."/>
            <person name="Mandalam R."/>
            <person name="Lebkowski J."/>
            <person name="Stanton L.W."/>
        </authorList>
    </citation>
    <scope>NUCLEOTIDE SEQUENCE [MRNA] OF 1-217</scope>
</reference>
<reference key="4">
    <citation type="journal article" date="1991" name="Proc. Natl. Acad. Sci. U.S.A.">
        <title>The evolutionarily conserved Kruppel-associated box domain defines a subfamily of eukaryotic multifingered proteins.</title>
        <authorList>
            <person name="Bellefroid E.J."/>
            <person name="Poncelet D.A."/>
            <person name="Lecocq P.J."/>
            <person name="Revelant O."/>
            <person name="Martial J.A."/>
        </authorList>
    </citation>
    <scope>NUCLEOTIDE SEQUENCE [MRNA] OF 1-195</scope>
</reference>
<keyword id="KW-0238">DNA-binding</keyword>
<keyword id="KW-0479">Metal-binding</keyword>
<keyword id="KW-0539">Nucleus</keyword>
<keyword id="KW-1267">Proteomics identification</keyword>
<keyword id="KW-1185">Reference proteome</keyword>
<keyword id="KW-0677">Repeat</keyword>
<keyword id="KW-0804">Transcription</keyword>
<keyword id="KW-0805">Transcription regulation</keyword>
<keyword id="KW-0862">Zinc</keyword>
<keyword id="KW-0863">Zinc-finger</keyword>
<sequence>MGPLEFRDVAIEFSLEEWHCLDTAQQNLYRDVMLENYRHLVFLGIVVTKPDLITCLEQGKKPFTVKRHEMIAKSPVMCFHFAQDLCPEQSLKDSFQKVIVTRYEKREYGNLELKKGCESVDEGKVHKRGYNGLNQCLTATQSKVFQCDTYVKVSHIFSNSNRHKIRDTGKKPFKCIECGKAFNQSSTLATHKKIHTGEITCKCEECGKAFNRSSHLTSHKRIHTGEKRYKCEDCGKELKYSSTLTAHKRIHTGEKRYKCEDCGKELKYSSTLTAHKRIHTGEKPYKCDKCGRAFISSSILYVHKISHTEEKPYKCEECGKAFKLSSILSTHKRIHTGEKPYKCEECGKAFRRSLVLRTHKRIHTGEKPYKCDKCGKAFISSSLLYKHKISHSEKKPYKCEECGKAFKRSSTLTIHKISHTEEKPYKCQECDKVFKRSSALSTHKIIHSGEKPYKCEECGKAFKRSSNLTTHKISHTEEKLYKCQECDKAFKYSSALSTHKIIHSGENPYKCEECGKAFKRSSVLSKHKIIHTGAKPYKCEECGKAFKRSSQLTSHKISHTGEKPYKCEECGKAFNLSSDLNTHKRIHIGQKAYIVKNMANL</sequence>
<name>ZNF90_HUMAN</name>
<gene>
    <name type="primary">ZNF90</name>
</gene>
<accession>Q03938</accession>
<accession>B9EH87</accession>